<keyword id="KW-0028">Amino-acid biosynthesis</keyword>
<keyword id="KW-0057">Aromatic amino acid biosynthesis</keyword>
<keyword id="KW-0315">Glutamine amidotransferase</keyword>
<keyword id="KW-0456">Lyase</keyword>
<keyword id="KW-1185">Reference proteome</keyword>
<keyword id="KW-0822">Tryptophan biosynthesis</keyword>
<dbReference type="EC" id="4.1.3.27"/>
<dbReference type="EMBL" id="M83788">
    <property type="protein sequence ID" value="AAA73178.1"/>
    <property type="molecule type" value="Genomic_DNA"/>
</dbReference>
<dbReference type="EMBL" id="CP001956">
    <property type="protein sequence ID" value="ADE03081.1"/>
    <property type="molecule type" value="Genomic_DNA"/>
</dbReference>
<dbReference type="PIR" id="B42301">
    <property type="entry name" value="B42301"/>
</dbReference>
<dbReference type="RefSeq" id="WP_004042365.1">
    <property type="nucleotide sequence ID" value="NC_013967.1"/>
</dbReference>
<dbReference type="SMR" id="P33974"/>
<dbReference type="STRING" id="309800.HVO_2453"/>
<dbReference type="MEROPS" id="C26.959"/>
<dbReference type="PaxDb" id="309800-C498_07565"/>
<dbReference type="EnsemblBacteria" id="ADE03081">
    <property type="protein sequence ID" value="ADE03081"/>
    <property type="gene ID" value="HVO_2453"/>
</dbReference>
<dbReference type="GeneID" id="8926019"/>
<dbReference type="KEGG" id="hvo:HVO_2453"/>
<dbReference type="eggNOG" id="arCOG00086">
    <property type="taxonomic scope" value="Archaea"/>
</dbReference>
<dbReference type="HOGENOM" id="CLU_014340_1_2_2"/>
<dbReference type="OrthoDB" id="3321at2157"/>
<dbReference type="UniPathway" id="UPA00035">
    <property type="reaction ID" value="UER00040"/>
</dbReference>
<dbReference type="Proteomes" id="UP000008243">
    <property type="component" value="Chromosome"/>
</dbReference>
<dbReference type="GO" id="GO:0005829">
    <property type="term" value="C:cytosol"/>
    <property type="evidence" value="ECO:0007669"/>
    <property type="project" value="TreeGrafter"/>
</dbReference>
<dbReference type="GO" id="GO:0004049">
    <property type="term" value="F:anthranilate synthase activity"/>
    <property type="evidence" value="ECO:0007669"/>
    <property type="project" value="UniProtKB-EC"/>
</dbReference>
<dbReference type="GO" id="GO:0000162">
    <property type="term" value="P:L-tryptophan biosynthetic process"/>
    <property type="evidence" value="ECO:0007669"/>
    <property type="project" value="UniProtKB-UniPathway"/>
</dbReference>
<dbReference type="CDD" id="cd01743">
    <property type="entry name" value="GATase1_Anthranilate_Synthase"/>
    <property type="match status" value="1"/>
</dbReference>
<dbReference type="FunFam" id="3.40.50.880:FF:000003">
    <property type="entry name" value="Anthranilate synthase component II"/>
    <property type="match status" value="1"/>
</dbReference>
<dbReference type="Gene3D" id="3.40.50.880">
    <property type="match status" value="1"/>
</dbReference>
<dbReference type="InterPro" id="IPR050472">
    <property type="entry name" value="Anth_synth/Amidotransfase"/>
</dbReference>
<dbReference type="InterPro" id="IPR053448">
    <property type="entry name" value="AS_beta_subunit"/>
</dbReference>
<dbReference type="InterPro" id="IPR029062">
    <property type="entry name" value="Class_I_gatase-like"/>
</dbReference>
<dbReference type="InterPro" id="IPR017926">
    <property type="entry name" value="GATASE"/>
</dbReference>
<dbReference type="InterPro" id="IPR006221">
    <property type="entry name" value="TrpG/PapA_dom"/>
</dbReference>
<dbReference type="NCBIfam" id="NF041322">
    <property type="entry name" value="Anth_synII_Halo"/>
    <property type="match status" value="1"/>
</dbReference>
<dbReference type="NCBIfam" id="TIGR00566">
    <property type="entry name" value="trpG_papA"/>
    <property type="match status" value="1"/>
</dbReference>
<dbReference type="PANTHER" id="PTHR43418:SF4">
    <property type="entry name" value="MULTIFUNCTIONAL TRYPTOPHAN BIOSYNTHESIS PROTEIN"/>
    <property type="match status" value="1"/>
</dbReference>
<dbReference type="PANTHER" id="PTHR43418">
    <property type="entry name" value="MULTIFUNCTIONAL TRYPTOPHAN BIOSYNTHESIS PROTEIN-RELATED"/>
    <property type="match status" value="1"/>
</dbReference>
<dbReference type="Pfam" id="PF00117">
    <property type="entry name" value="GATase"/>
    <property type="match status" value="1"/>
</dbReference>
<dbReference type="PRINTS" id="PR00097">
    <property type="entry name" value="ANTSNTHASEII"/>
</dbReference>
<dbReference type="PRINTS" id="PR00099">
    <property type="entry name" value="CPSGATASE"/>
</dbReference>
<dbReference type="PRINTS" id="PR00096">
    <property type="entry name" value="GATASE"/>
</dbReference>
<dbReference type="SUPFAM" id="SSF52317">
    <property type="entry name" value="Class I glutamine amidotransferase-like"/>
    <property type="match status" value="1"/>
</dbReference>
<dbReference type="PROSITE" id="PS51273">
    <property type="entry name" value="GATASE_TYPE_1"/>
    <property type="match status" value="1"/>
</dbReference>
<organism>
    <name type="scientific">Haloferax volcanii (strain ATCC 29605 / DSM 3757 / JCM 8879 / NBRC 14742 / NCIMB 2012 / VKM B-1768 / DS2)</name>
    <name type="common">Halobacterium volcanii</name>
    <dbReference type="NCBI Taxonomy" id="309800"/>
    <lineage>
        <taxon>Archaea</taxon>
        <taxon>Methanobacteriati</taxon>
        <taxon>Methanobacteriota</taxon>
        <taxon>Stenosarchaea group</taxon>
        <taxon>Halobacteria</taxon>
        <taxon>Halobacteriales</taxon>
        <taxon>Haloferacaceae</taxon>
        <taxon>Haloferax</taxon>
    </lineage>
</organism>
<reference key="1">
    <citation type="journal article" date="1992" name="J. Bacteriol.">
        <title>Genes for tryptophan biosynthesis in the halophilic archaebacterium Haloferax volcanii: the trpDFEG cluster.</title>
        <authorList>
            <person name="Lam W.L."/>
            <person name="Logan S.M."/>
            <person name="Doolittle W.F."/>
        </authorList>
    </citation>
    <scope>NUCLEOTIDE SEQUENCE [GENOMIC DNA]</scope>
    <source>
        <strain>DS2 / DSM 5716 / WFD11</strain>
    </source>
</reference>
<reference key="2">
    <citation type="journal article" date="2010" name="PLoS ONE">
        <title>The complete genome sequence of Haloferax volcanii DS2, a model archaeon.</title>
        <authorList>
            <person name="Hartman A.L."/>
            <person name="Norais C."/>
            <person name="Badger J.H."/>
            <person name="Delmas S."/>
            <person name="Haldenby S."/>
            <person name="Madupu R."/>
            <person name="Robinson J."/>
            <person name="Khouri H."/>
            <person name="Ren Q."/>
            <person name="Lowe T.M."/>
            <person name="Maupin-Furlow J."/>
            <person name="Pohlschroder M."/>
            <person name="Daniels C."/>
            <person name="Pfeiffer F."/>
            <person name="Allers T."/>
            <person name="Eisen J.A."/>
        </authorList>
    </citation>
    <scope>NUCLEOTIDE SEQUENCE [LARGE SCALE GENOMIC DNA]</scope>
    <source>
        <strain>ATCC 29605 / DSM 3757 / JCM 8879 / NBRC 14742 / NCIMB 2012 / VKM B-1768 / DS2</strain>
    </source>
</reference>
<feature type="chain" id="PRO_0000056883" description="Anthranilate synthase component 2">
    <location>
        <begin position="1"/>
        <end position="204"/>
    </location>
</feature>
<feature type="domain" description="Glutamine amidotransferase type-1" evidence="3">
    <location>
        <begin position="3"/>
        <end position="204"/>
    </location>
</feature>
<feature type="active site" description="Nucleophile; for GATase activity" evidence="3">
    <location>
        <position position="88"/>
    </location>
</feature>
<feature type="active site" description="For GATase activity" evidence="3">
    <location>
        <position position="178"/>
    </location>
</feature>
<feature type="active site" description="For GATase activity" evidence="3">
    <location>
        <position position="180"/>
    </location>
</feature>
<feature type="binding site" evidence="2">
    <location>
        <begin position="58"/>
        <end position="60"/>
    </location>
    <ligand>
        <name>L-glutamine</name>
        <dbReference type="ChEBI" id="CHEBI:58359"/>
    </ligand>
</feature>
<feature type="binding site" evidence="2">
    <location>
        <begin position="138"/>
        <end position="139"/>
    </location>
    <ligand>
        <name>L-glutamine</name>
        <dbReference type="ChEBI" id="CHEBI:58359"/>
    </ligand>
</feature>
<feature type="sequence conflict" description="In Ref. 1; AAA73178." evidence="4" ref="1">
    <original>N</original>
    <variation>T</variation>
    <location>
        <position position="38"/>
    </location>
</feature>
<feature type="sequence conflict" description="In Ref. 1; AAA73178." evidence="4" ref="1">
    <original>EP</original>
    <variation>DA</variation>
    <location>
        <begin position="107"/>
        <end position="108"/>
    </location>
</feature>
<sequence>MIRLVVVDNFDSFTYNLVEYFSEQTVEGEPLDIEVRKNTASLDEIRDLDPDAIVISPGPGHPKNDRDVGVTNDVLTELSTEIPTLGVCLGLEAAVYAYGGTIGHAPEPIHGKAFPVDHDGAGVFAGLEDGFPAGRYHSLVATDVPDCFDVSATTDHDGEALVMGVRHRDYPIECVQFHPESVLTGSGHGVVRNFLTAVAGFDVA</sequence>
<protein>
    <recommendedName>
        <fullName>Anthranilate synthase component 2</fullName>
        <shortName>AS</shortName>
        <shortName>ASII</shortName>
        <ecNumber>4.1.3.27</ecNumber>
    </recommendedName>
    <alternativeName>
        <fullName>Anthranilate synthase, GATase component</fullName>
    </alternativeName>
    <alternativeName>
        <fullName>Anthranilate synthase, glutamine amidotransferase component</fullName>
    </alternativeName>
</protein>
<proteinExistence type="inferred from homology"/>
<evidence type="ECO:0000250" key="1"/>
<evidence type="ECO:0000250" key="2">
    <source>
        <dbReference type="UniProtKB" id="P00900"/>
    </source>
</evidence>
<evidence type="ECO:0000255" key="3">
    <source>
        <dbReference type="PROSITE-ProRule" id="PRU00605"/>
    </source>
</evidence>
<evidence type="ECO:0000305" key="4"/>
<gene>
    <name type="primary">trpG</name>
    <name type="ordered locus">HVO_2453</name>
</gene>
<name>TRPG_HALVD</name>
<accession>P33974</accession>
<accession>D4GT35</accession>
<comment type="function">
    <text evidence="1">Part of a heterotetrameric complex that catalyzes the two-step biosynthesis of anthranilate, an intermediate in the biosynthesis of L-tryptophan. In the first step, the glutamine-binding beta subunit (TrpG) of anthranilate synthase (AS) provides the glutamine amidotransferase activity which generates ammonia as a substrate that, along with chorismate, is used in the second step, catalyzed by the large alpha subunit of AS (TrpE) to produce anthranilate. In the absence of TrpG, TrpE can synthesize anthranilate directly from chorismate and high concentrations of ammonia (By similarity).</text>
</comment>
<comment type="catalytic activity">
    <reaction>
        <text>chorismate + L-glutamine = anthranilate + pyruvate + L-glutamate + H(+)</text>
        <dbReference type="Rhea" id="RHEA:21732"/>
        <dbReference type="ChEBI" id="CHEBI:15361"/>
        <dbReference type="ChEBI" id="CHEBI:15378"/>
        <dbReference type="ChEBI" id="CHEBI:16567"/>
        <dbReference type="ChEBI" id="CHEBI:29748"/>
        <dbReference type="ChEBI" id="CHEBI:29985"/>
        <dbReference type="ChEBI" id="CHEBI:58359"/>
        <dbReference type="EC" id="4.1.3.27"/>
    </reaction>
</comment>
<comment type="pathway">
    <text>Amino-acid biosynthesis; L-tryptophan biosynthesis; L-tryptophan from chorismate: step 1/5.</text>
</comment>
<comment type="subunit">
    <text evidence="1">Heterotetramer consisting of two non-identical subunits: a beta subunit (TrpG) and a large alpha subunit (TrpE).</text>
</comment>